<comment type="function">
    <text evidence="1 4">Involved in a phospholipid transport pathway that maintains lipid asymmetry in the outer membrane by retrograde trafficking of phospholipids from the outer membrane to the inner membrane (By similarity). Required for intercellular spreading of S.flexneri (PubMed:8145644).</text>
</comment>
<comment type="subcellular location">
    <subcellularLocation>
        <location evidence="1">Cell outer membrane</location>
        <topology evidence="1 2">Lipid-anchor</topology>
    </subcellularLocation>
</comment>
<comment type="similarity">
    <text evidence="6">Belongs to the MlaA family.</text>
</comment>
<name>MLAA_SHIFL</name>
<dbReference type="EMBL" id="D16293">
    <property type="protein sequence ID" value="BAA03799.1"/>
    <property type="molecule type" value="Genomic_DNA"/>
</dbReference>
<dbReference type="EMBL" id="AE005674">
    <property type="protein sequence ID" value="AAN43935.1"/>
    <property type="molecule type" value="Genomic_DNA"/>
</dbReference>
<dbReference type="EMBL" id="AE014073">
    <property type="protein sequence ID" value="AAP17748.1"/>
    <property type="molecule type" value="Genomic_DNA"/>
</dbReference>
<dbReference type="RefSeq" id="NP_708228.1">
    <property type="nucleotide sequence ID" value="NC_004337.2"/>
</dbReference>
<dbReference type="RefSeq" id="WP_000776763.1">
    <property type="nucleotide sequence ID" value="NZ_WPGW01000257.1"/>
</dbReference>
<dbReference type="SMR" id="P43262"/>
<dbReference type="STRING" id="198214.SF2424"/>
<dbReference type="PaxDb" id="198214-SF2424"/>
<dbReference type="GeneID" id="1024405"/>
<dbReference type="KEGG" id="sfl:SF2424"/>
<dbReference type="KEGG" id="sfx:S2559"/>
<dbReference type="PATRIC" id="fig|198214.7.peg.2896"/>
<dbReference type="HOGENOM" id="CLU_059326_3_2_6"/>
<dbReference type="Proteomes" id="UP000001006">
    <property type="component" value="Chromosome"/>
</dbReference>
<dbReference type="Proteomes" id="UP000002673">
    <property type="component" value="Chromosome"/>
</dbReference>
<dbReference type="GO" id="GO:0009279">
    <property type="term" value="C:cell outer membrane"/>
    <property type="evidence" value="ECO:0007669"/>
    <property type="project" value="UniProtKB-SubCell"/>
</dbReference>
<dbReference type="GO" id="GO:0120010">
    <property type="term" value="P:intermembrane phospholipid transfer"/>
    <property type="evidence" value="ECO:0007669"/>
    <property type="project" value="TreeGrafter"/>
</dbReference>
<dbReference type="InterPro" id="IPR007428">
    <property type="entry name" value="MlaA"/>
</dbReference>
<dbReference type="NCBIfam" id="NF011672">
    <property type="entry name" value="PRK15091.1"/>
    <property type="match status" value="1"/>
</dbReference>
<dbReference type="PANTHER" id="PTHR30035:SF3">
    <property type="entry name" value="INTERMEMBRANE PHOSPHOLIPID TRANSPORT SYSTEM LIPOPROTEIN MLAA"/>
    <property type="match status" value="1"/>
</dbReference>
<dbReference type="PANTHER" id="PTHR30035">
    <property type="entry name" value="LIPOPROTEIN VACJ-RELATED"/>
    <property type="match status" value="1"/>
</dbReference>
<dbReference type="Pfam" id="PF04333">
    <property type="entry name" value="MlaA"/>
    <property type="match status" value="1"/>
</dbReference>
<dbReference type="PRINTS" id="PR01805">
    <property type="entry name" value="VACJLIPOPROT"/>
</dbReference>
<dbReference type="PROSITE" id="PS51257">
    <property type="entry name" value="PROKAR_LIPOPROTEIN"/>
    <property type="match status" value="1"/>
</dbReference>
<feature type="signal peptide" evidence="2">
    <location>
        <begin position="1"/>
        <end position="17"/>
    </location>
</feature>
<feature type="chain" id="PRO_0000018211" description="Intermembrane phospholipid transport system lipoprotein MlaA">
    <location>
        <begin position="18"/>
        <end position="251"/>
    </location>
</feature>
<feature type="region of interest" description="Disordered" evidence="3">
    <location>
        <begin position="228"/>
        <end position="251"/>
    </location>
</feature>
<feature type="lipid moiety-binding region" description="N-palmitoyl cysteine" evidence="2">
    <location>
        <position position="18"/>
    </location>
</feature>
<feature type="lipid moiety-binding region" description="S-diacylglycerol cysteine" evidence="2">
    <location>
        <position position="18"/>
    </location>
</feature>
<evidence type="ECO:0000250" key="1">
    <source>
        <dbReference type="UniProtKB" id="P76506"/>
    </source>
</evidence>
<evidence type="ECO:0000255" key="2">
    <source>
        <dbReference type="PROSITE-ProRule" id="PRU00303"/>
    </source>
</evidence>
<evidence type="ECO:0000256" key="3">
    <source>
        <dbReference type="SAM" id="MobiDB-lite"/>
    </source>
</evidence>
<evidence type="ECO:0000269" key="4">
    <source>
    </source>
</evidence>
<evidence type="ECO:0000303" key="5">
    <source>
    </source>
</evidence>
<evidence type="ECO:0000305" key="6"/>
<protein>
    <recommendedName>
        <fullName evidence="1">Intermembrane phospholipid transport system lipoprotein MlaA</fullName>
    </recommendedName>
</protein>
<sequence>MKLRLSALALGTTLLVGCASSGTDQQGRSDPLEGFNRTMYNFNFNVLDPYIVRPVAVAWRDYVPQPARNGLSNFTGNLEEPAVMVNYFLQGDPYQGMVHFTRFFLNTILGMGGFIDVAGMANPKLQRTEPHRFGSTLGHYGVGYGPYVQLPFYGSFTLRDDGGDMADALYPVLSWLTWPMSVGKWTLEGIETRAQLLDSDGLLRQSSDPYIMVREAYFQRHDFIANGGELKPQENPNAQAIQDDLKDIDSE</sequence>
<organism>
    <name type="scientific">Shigella flexneri</name>
    <dbReference type="NCBI Taxonomy" id="623"/>
    <lineage>
        <taxon>Bacteria</taxon>
        <taxon>Pseudomonadati</taxon>
        <taxon>Pseudomonadota</taxon>
        <taxon>Gammaproteobacteria</taxon>
        <taxon>Enterobacterales</taxon>
        <taxon>Enterobacteriaceae</taxon>
        <taxon>Shigella</taxon>
    </lineage>
</organism>
<gene>
    <name evidence="1" type="primary">mlaA</name>
    <name evidence="5" type="synonym">vacJ</name>
    <name type="ordered locus">SF2424</name>
    <name type="ordered locus">S2559</name>
</gene>
<keyword id="KW-0998">Cell outer membrane</keyword>
<keyword id="KW-0449">Lipoprotein</keyword>
<keyword id="KW-0472">Membrane</keyword>
<keyword id="KW-0564">Palmitate</keyword>
<keyword id="KW-1185">Reference proteome</keyword>
<keyword id="KW-0732">Signal</keyword>
<keyword id="KW-0843">Virulence</keyword>
<accession>P43262</accession>
<reference key="1">
    <citation type="journal article" date="1994" name="Mol. Microbiol.">
        <title>Identification and characterization of a chromosomal virulence gene, vacJ, required for intercellular spreading of Shigella flexneri.</title>
        <authorList>
            <person name="Suzuki T."/>
            <person name="Murai T."/>
            <person name="Fukuda I."/>
            <person name="Tobe T."/>
            <person name="Yoshikawa M."/>
            <person name="Sasakawa C."/>
        </authorList>
    </citation>
    <scope>NUCLEOTIDE SEQUENCE [GENOMIC DNA]</scope>
    <scope>FUNCTION IN INTERCELLULAR SPREADING</scope>
    <source>
        <strain>YSH6000 / Serotype 2a</strain>
    </source>
</reference>
<reference key="2">
    <citation type="journal article" date="2002" name="Nucleic Acids Res.">
        <title>Genome sequence of Shigella flexneri 2a: insights into pathogenicity through comparison with genomes of Escherichia coli K12 and O157.</title>
        <authorList>
            <person name="Jin Q."/>
            <person name="Yuan Z."/>
            <person name="Xu J."/>
            <person name="Wang Y."/>
            <person name="Shen Y."/>
            <person name="Lu W."/>
            <person name="Wang J."/>
            <person name="Liu H."/>
            <person name="Yang J."/>
            <person name="Yang F."/>
            <person name="Zhang X."/>
            <person name="Zhang J."/>
            <person name="Yang G."/>
            <person name="Wu H."/>
            <person name="Qu D."/>
            <person name="Dong J."/>
            <person name="Sun L."/>
            <person name="Xue Y."/>
            <person name="Zhao A."/>
            <person name="Gao Y."/>
            <person name="Zhu J."/>
            <person name="Kan B."/>
            <person name="Ding K."/>
            <person name="Chen S."/>
            <person name="Cheng H."/>
            <person name="Yao Z."/>
            <person name="He B."/>
            <person name="Chen R."/>
            <person name="Ma D."/>
            <person name="Qiang B."/>
            <person name="Wen Y."/>
            <person name="Hou Y."/>
            <person name="Yu J."/>
        </authorList>
    </citation>
    <scope>NUCLEOTIDE SEQUENCE [LARGE SCALE GENOMIC DNA]</scope>
    <source>
        <strain>301 / Serotype 2a</strain>
    </source>
</reference>
<reference key="3">
    <citation type="journal article" date="2003" name="Infect. Immun.">
        <title>Complete genome sequence and comparative genomics of Shigella flexneri serotype 2a strain 2457T.</title>
        <authorList>
            <person name="Wei J."/>
            <person name="Goldberg M.B."/>
            <person name="Burland V."/>
            <person name="Venkatesan M.M."/>
            <person name="Deng W."/>
            <person name="Fournier G."/>
            <person name="Mayhew G.F."/>
            <person name="Plunkett G. III"/>
            <person name="Rose D.J."/>
            <person name="Darling A."/>
            <person name="Mau B."/>
            <person name="Perna N.T."/>
            <person name="Payne S.M."/>
            <person name="Runyen-Janecky L.J."/>
            <person name="Zhou S."/>
            <person name="Schwartz D.C."/>
            <person name="Blattner F.R."/>
        </authorList>
    </citation>
    <scope>NUCLEOTIDE SEQUENCE [LARGE SCALE GENOMIC DNA]</scope>
    <source>
        <strain>ATCC 700930 / 2457T / Serotype 2a</strain>
    </source>
</reference>
<proteinExistence type="evidence at protein level"/>